<dbReference type="EMBL" id="M15052">
    <property type="protein sequence ID" value="AAA49119.1"/>
    <property type="molecule type" value="Genomic_DNA"/>
</dbReference>
<dbReference type="PIR" id="A29161">
    <property type="entry name" value="A29161"/>
</dbReference>
<dbReference type="RefSeq" id="NP_001026769.1">
    <property type="nucleotide sequence ID" value="NM_001031598.1"/>
</dbReference>
<dbReference type="SMR" id="P09652"/>
<dbReference type="FunCoup" id="P09652">
    <property type="interactions" value="1516"/>
</dbReference>
<dbReference type="STRING" id="9031.ENSGALP00000051188"/>
<dbReference type="ChEMBL" id="CHEMBL4295707"/>
<dbReference type="iPTMnet" id="P09652"/>
<dbReference type="KEGG" id="gga:431043"/>
<dbReference type="VEuPathDB" id="HostDB:geneid_431043"/>
<dbReference type="InParanoid" id="P09652"/>
<dbReference type="PhylomeDB" id="P09652"/>
<dbReference type="PRO" id="PR:P09652"/>
<dbReference type="Proteomes" id="UP000000539">
    <property type="component" value="Unassembled WGS sequence"/>
</dbReference>
<dbReference type="GO" id="GO:0005737">
    <property type="term" value="C:cytoplasm"/>
    <property type="evidence" value="ECO:0000318"/>
    <property type="project" value="GO_Central"/>
</dbReference>
<dbReference type="GO" id="GO:0005874">
    <property type="term" value="C:microtubule"/>
    <property type="evidence" value="ECO:0000318"/>
    <property type="project" value="GO_Central"/>
</dbReference>
<dbReference type="GO" id="GO:0005525">
    <property type="term" value="F:GTP binding"/>
    <property type="evidence" value="ECO:0000318"/>
    <property type="project" value="GO_Central"/>
</dbReference>
<dbReference type="GO" id="GO:0003924">
    <property type="term" value="F:GTPase activity"/>
    <property type="evidence" value="ECO:0007669"/>
    <property type="project" value="InterPro"/>
</dbReference>
<dbReference type="GO" id="GO:0046872">
    <property type="term" value="F:metal ion binding"/>
    <property type="evidence" value="ECO:0007669"/>
    <property type="project" value="UniProtKB-KW"/>
</dbReference>
<dbReference type="GO" id="GO:0005200">
    <property type="term" value="F:structural constituent of cytoskeleton"/>
    <property type="evidence" value="ECO:0000318"/>
    <property type="project" value="GO_Central"/>
</dbReference>
<dbReference type="GO" id="GO:0007411">
    <property type="term" value="P:axon guidance"/>
    <property type="evidence" value="ECO:0000318"/>
    <property type="project" value="GO_Central"/>
</dbReference>
<dbReference type="GO" id="GO:0000226">
    <property type="term" value="P:microtubule cytoskeleton organization"/>
    <property type="evidence" value="ECO:0000318"/>
    <property type="project" value="GO_Central"/>
</dbReference>
<dbReference type="GO" id="GO:0000278">
    <property type="term" value="P:mitotic cell cycle"/>
    <property type="evidence" value="ECO:0000318"/>
    <property type="project" value="GO_Central"/>
</dbReference>
<dbReference type="CDD" id="cd02187">
    <property type="entry name" value="beta_tubulin"/>
    <property type="match status" value="1"/>
</dbReference>
<dbReference type="FunFam" id="1.10.287.600:FF:000002">
    <property type="entry name" value="Tubulin beta chain"/>
    <property type="match status" value="1"/>
</dbReference>
<dbReference type="FunFam" id="3.30.1330.20:FF:000002">
    <property type="entry name" value="Tubulin beta chain"/>
    <property type="match status" value="1"/>
</dbReference>
<dbReference type="FunFam" id="3.40.50.1440:FF:000003">
    <property type="entry name" value="Tubulin beta chain"/>
    <property type="match status" value="1"/>
</dbReference>
<dbReference type="Gene3D" id="1.10.287.600">
    <property type="entry name" value="Helix hairpin bin"/>
    <property type="match status" value="1"/>
</dbReference>
<dbReference type="Gene3D" id="3.30.1330.20">
    <property type="entry name" value="Tubulin/FtsZ, C-terminal domain"/>
    <property type="match status" value="1"/>
</dbReference>
<dbReference type="Gene3D" id="3.40.50.1440">
    <property type="entry name" value="Tubulin/FtsZ, GTPase domain"/>
    <property type="match status" value="1"/>
</dbReference>
<dbReference type="InterPro" id="IPR013838">
    <property type="entry name" value="Beta-tubulin_BS"/>
</dbReference>
<dbReference type="InterPro" id="IPR002453">
    <property type="entry name" value="Beta_tubulin"/>
</dbReference>
<dbReference type="InterPro" id="IPR008280">
    <property type="entry name" value="Tub_FtsZ_C"/>
</dbReference>
<dbReference type="InterPro" id="IPR000217">
    <property type="entry name" value="Tubulin"/>
</dbReference>
<dbReference type="InterPro" id="IPR037103">
    <property type="entry name" value="Tubulin/FtsZ-like_C"/>
</dbReference>
<dbReference type="InterPro" id="IPR018316">
    <property type="entry name" value="Tubulin/FtsZ_2-layer-sand-dom"/>
</dbReference>
<dbReference type="InterPro" id="IPR036525">
    <property type="entry name" value="Tubulin/FtsZ_GTPase_sf"/>
</dbReference>
<dbReference type="InterPro" id="IPR023123">
    <property type="entry name" value="Tubulin_C"/>
</dbReference>
<dbReference type="InterPro" id="IPR017975">
    <property type="entry name" value="Tubulin_CS"/>
</dbReference>
<dbReference type="InterPro" id="IPR003008">
    <property type="entry name" value="Tubulin_FtsZ_GTPase"/>
</dbReference>
<dbReference type="PANTHER" id="PTHR11588">
    <property type="entry name" value="TUBULIN"/>
    <property type="match status" value="1"/>
</dbReference>
<dbReference type="Pfam" id="PF00091">
    <property type="entry name" value="Tubulin"/>
    <property type="match status" value="1"/>
</dbReference>
<dbReference type="Pfam" id="PF03953">
    <property type="entry name" value="Tubulin_C"/>
    <property type="match status" value="1"/>
</dbReference>
<dbReference type="PRINTS" id="PR01163">
    <property type="entry name" value="BETATUBULIN"/>
</dbReference>
<dbReference type="PRINTS" id="PR01161">
    <property type="entry name" value="TUBULIN"/>
</dbReference>
<dbReference type="SMART" id="SM00864">
    <property type="entry name" value="Tubulin"/>
    <property type="match status" value="1"/>
</dbReference>
<dbReference type="SMART" id="SM00865">
    <property type="entry name" value="Tubulin_C"/>
    <property type="match status" value="1"/>
</dbReference>
<dbReference type="SUPFAM" id="SSF55307">
    <property type="entry name" value="Tubulin C-terminal domain-like"/>
    <property type="match status" value="1"/>
</dbReference>
<dbReference type="SUPFAM" id="SSF52490">
    <property type="entry name" value="Tubulin nucleotide-binding domain-like"/>
    <property type="match status" value="1"/>
</dbReference>
<dbReference type="PROSITE" id="PS00227">
    <property type="entry name" value="TUBULIN"/>
    <property type="match status" value="1"/>
</dbReference>
<dbReference type="PROSITE" id="PS00228">
    <property type="entry name" value="TUBULIN_B_AUTOREG"/>
    <property type="match status" value="1"/>
</dbReference>
<proteinExistence type="evidence at protein level"/>
<protein>
    <recommendedName>
        <fullName>Tubulin beta-4 chain</fullName>
    </recommendedName>
    <alternativeName>
        <fullName>Beta-tubulin class-III</fullName>
    </alternativeName>
</protein>
<comment type="function">
    <text>Tubulin is the major constituent of microtubules, a cylinder consisting of laterally associated linear protofilaments composed of alpha- and beta-tubulin heterodimers. Microtubules grow by the addition of GTP-tubulin dimers to the microtubule end, where a stabilizing cap forms. Below the cap, tubulin dimers are in GDP-bound state, owing to GTPase activity of alpha-tubulin.</text>
</comment>
<comment type="cofactor">
    <cofactor evidence="3">
        <name>Mg(2+)</name>
        <dbReference type="ChEBI" id="CHEBI:18420"/>
    </cofactor>
</comment>
<comment type="subunit">
    <text>Dimer of alpha and beta chains. A typical microtubule is a hollow water-filled tube with an outer diameter of 25 nm and an inner diameter of 15 nM. Alpha-beta heterodimers associate head-to-tail to form protofilaments running lengthwise along the microtubule wall with the beta-tubulin subunit facing the microtubule plus end conferring a structural polarity. Microtubules usually have 13 protofilaments but different protofilament numbers can be found in some organisms and specialized cells.</text>
</comment>
<comment type="subcellular location">
    <subcellularLocation>
        <location>Cytoplasm</location>
        <location>Cytoskeleton</location>
    </subcellularLocation>
</comment>
<comment type="tissue specificity">
    <text>Neuron specific.</text>
</comment>
<comment type="domain">
    <text evidence="2">The MREI motif is common among all beta-tubulin isoforms and may be critical for tubulin autoregulation.</text>
</comment>
<comment type="PTM">
    <text evidence="1">Some glutamate residues at the C-terminus are polyglycylated, resulting in polyglycine chains on the gamma-carboxyl group. Glycylation is mainly limited to tubulin incorporated into axonemes (cilia and flagella) whereas glutamylation is prevalent in neuronal cells, centrioles, axonemes, and the mitotic spindle. Both modifications can coexist on the same protein on adjacent residues, and lowering polyglycylation levels increases polyglutamylation, and reciprocally. The precise function of polyglycylation is still unclear.</text>
</comment>
<comment type="PTM">
    <text evidence="1 6">Some glutamate residues at the C-terminus are polyglutamylated, resulting in polyglutamate chains on the gamma-carboxyl group (By similarity). Polyglutamylation plays a key role in microtubule severing by spastin (SPAST). SPAST preferentially recognizes and acts on microtubules decorated with short polyglutamate tails: severing activity by SPAST increases as the number of glutamates per tubulin rises from one to eight, but decreases beyond this glutamylation threshold (By similarity).</text>
</comment>
<comment type="similarity">
    <text evidence="9">Belongs to the tubulin family.</text>
</comment>
<reference key="1">
    <citation type="journal article" date="1984" name="J. Cell Biol.">
        <title>Sequence of a highly divergent beta tubulin gene reveals regional heterogeneity in the beta tubulin polypeptide.</title>
        <authorList>
            <person name="Sullivan K.F."/>
            <person name="Cleveland D.W."/>
        </authorList>
    </citation>
    <scope>NUCLEOTIDE SEQUENCE [GENOMIC DNA]</scope>
</reference>
<reference key="2">
    <citation type="journal article" date="1988" name="FEBS Lett.">
        <title>Identification of the phosphorylated beta-tubulin isotype in differentiated neuroblastoma cells.</title>
        <authorList>
            <person name="Luduena R.F."/>
            <person name="Zimmermann H.-P."/>
            <person name="Little M."/>
        </authorList>
    </citation>
    <scope>PHOSPHORYLATION AT SER-444</scope>
</reference>
<keyword id="KW-0963">Cytoplasm</keyword>
<keyword id="KW-0206">Cytoskeleton</keyword>
<keyword id="KW-0342">GTP-binding</keyword>
<keyword id="KW-1017">Isopeptide bond</keyword>
<keyword id="KW-0460">Magnesium</keyword>
<keyword id="KW-0479">Metal-binding</keyword>
<keyword id="KW-0493">Microtubule</keyword>
<keyword id="KW-0547">Nucleotide-binding</keyword>
<keyword id="KW-0597">Phosphoprotein</keyword>
<keyword id="KW-1185">Reference proteome</keyword>
<evidence type="ECO:0000250" key="1">
    <source>
        <dbReference type="UniProtKB" id="A2AQ07"/>
    </source>
</evidence>
<evidence type="ECO:0000250" key="2">
    <source>
        <dbReference type="UniProtKB" id="P07437"/>
    </source>
</evidence>
<evidence type="ECO:0000250" key="3">
    <source>
        <dbReference type="UniProtKB" id="P68363"/>
    </source>
</evidence>
<evidence type="ECO:0000250" key="4">
    <source>
        <dbReference type="UniProtKB" id="Q13509"/>
    </source>
</evidence>
<evidence type="ECO:0000250" key="5">
    <source>
        <dbReference type="UniProtKB" id="Q2T9S0"/>
    </source>
</evidence>
<evidence type="ECO:0000250" key="6">
    <source>
        <dbReference type="UniProtKB" id="Q71U36"/>
    </source>
</evidence>
<evidence type="ECO:0000256" key="7">
    <source>
        <dbReference type="SAM" id="MobiDB-lite"/>
    </source>
</evidence>
<evidence type="ECO:0000269" key="8">
    <source>
    </source>
</evidence>
<evidence type="ECO:0000305" key="9"/>
<organism>
    <name type="scientific">Gallus gallus</name>
    <name type="common">Chicken</name>
    <dbReference type="NCBI Taxonomy" id="9031"/>
    <lineage>
        <taxon>Eukaryota</taxon>
        <taxon>Metazoa</taxon>
        <taxon>Chordata</taxon>
        <taxon>Craniata</taxon>
        <taxon>Vertebrata</taxon>
        <taxon>Euteleostomi</taxon>
        <taxon>Archelosauria</taxon>
        <taxon>Archosauria</taxon>
        <taxon>Dinosauria</taxon>
        <taxon>Saurischia</taxon>
        <taxon>Theropoda</taxon>
        <taxon>Coelurosauria</taxon>
        <taxon>Aves</taxon>
        <taxon>Neognathae</taxon>
        <taxon>Galloanserae</taxon>
        <taxon>Galliformes</taxon>
        <taxon>Phasianidae</taxon>
        <taxon>Phasianinae</taxon>
        <taxon>Gallus</taxon>
    </lineage>
</organism>
<name>TBB4_CHICK</name>
<sequence>MREIVHIQAGQCGNQIGAKFWEVISDEHGIDPSGNYVGDSDLQLERISVYYNEASSHKYVPRAILVDLEPGTMDSVRSGAFGHLFRPDNFIFGQSGAGNNWAKGHYTEGAELVDSVLDVVRKECENCDCLQGFQLTHSLGGGTGSGMGTLLISKVREEYPDRIMNTFSVVPSPKVSDTVVEPYNATLSIHQLVENTDETYCIDNEALYDICFRTLKLATPTYGDLNHLVSATMSGVTTSLRFPGQLNADLRKLAVNMVPFPRLHFFMPGFAPLTRRGSQQYRALTVPELTQQMFDAKNMMAACDPRHGRYLTVATVFRGRMSMKEVDEQMLAIQSKNSSYFVEWIPNNVKVAVCDIPPRGLKMSSTFIGNSTAIQELFKRISEQFTAMFRRKAFLHWYTGEGMDEMEFTEAESNMNDLVSEYQQYQDATAEEEGEMYEDDEEESEQGAK</sequence>
<feature type="chain" id="PRO_0000048266" description="Tubulin beta-4 chain">
    <location>
        <begin position="1"/>
        <end position="449"/>
    </location>
</feature>
<feature type="region of interest" description="Disordered" evidence="7">
    <location>
        <begin position="421"/>
        <end position="449"/>
    </location>
</feature>
<feature type="short sequence motif" description="MREI motif" evidence="2">
    <location>
        <begin position="1"/>
        <end position="4"/>
    </location>
</feature>
<feature type="compositionally biased region" description="Acidic residues" evidence="7">
    <location>
        <begin position="429"/>
        <end position="449"/>
    </location>
</feature>
<feature type="binding site" evidence="4">
    <location>
        <position position="11"/>
    </location>
    <ligand>
        <name>GTP</name>
        <dbReference type="ChEBI" id="CHEBI:37565"/>
    </ligand>
</feature>
<feature type="binding site" evidence="3">
    <location>
        <position position="69"/>
    </location>
    <ligand>
        <name>GTP</name>
        <dbReference type="ChEBI" id="CHEBI:37565"/>
    </ligand>
</feature>
<feature type="binding site" evidence="3">
    <location>
        <position position="69"/>
    </location>
    <ligand>
        <name>Mg(2+)</name>
        <dbReference type="ChEBI" id="CHEBI:18420"/>
    </ligand>
</feature>
<feature type="binding site" evidence="4">
    <location>
        <position position="138"/>
    </location>
    <ligand>
        <name>GTP</name>
        <dbReference type="ChEBI" id="CHEBI:37565"/>
    </ligand>
</feature>
<feature type="binding site" evidence="4">
    <location>
        <position position="142"/>
    </location>
    <ligand>
        <name>GTP</name>
        <dbReference type="ChEBI" id="CHEBI:37565"/>
    </ligand>
</feature>
<feature type="binding site" evidence="4">
    <location>
        <position position="143"/>
    </location>
    <ligand>
        <name>GTP</name>
        <dbReference type="ChEBI" id="CHEBI:37565"/>
    </ligand>
</feature>
<feature type="binding site" evidence="4">
    <location>
        <position position="144"/>
    </location>
    <ligand>
        <name>GTP</name>
        <dbReference type="ChEBI" id="CHEBI:37565"/>
    </ligand>
</feature>
<feature type="binding site" evidence="4">
    <location>
        <position position="204"/>
    </location>
    <ligand>
        <name>GTP</name>
        <dbReference type="ChEBI" id="CHEBI:37565"/>
    </ligand>
</feature>
<feature type="binding site" evidence="4">
    <location>
        <position position="226"/>
    </location>
    <ligand>
        <name>GTP</name>
        <dbReference type="ChEBI" id="CHEBI:37565"/>
    </ligand>
</feature>
<feature type="modified residue" description="5-glutamyl polyglutamate" evidence="5">
    <location>
        <position position="438"/>
    </location>
</feature>
<feature type="modified residue" description="Phosphoserine" evidence="8">
    <location>
        <position position="444"/>
    </location>
</feature>
<accession>P09652</accession>